<comment type="function">
    <text evidence="1">Catalyzes the dehydration of methylthioribulose-1-phosphate (MTRu-1-P) into 2,3-diketo-5-methylthiopentyl-1-phosphate (DK-MTP-1-P).</text>
</comment>
<comment type="catalytic activity">
    <reaction evidence="1">
        <text>5-(methylsulfanyl)-D-ribulose 1-phosphate = 5-methylsulfanyl-2,3-dioxopentyl phosphate + H2O</text>
        <dbReference type="Rhea" id="RHEA:15549"/>
        <dbReference type="ChEBI" id="CHEBI:15377"/>
        <dbReference type="ChEBI" id="CHEBI:58548"/>
        <dbReference type="ChEBI" id="CHEBI:58828"/>
        <dbReference type="EC" id="4.2.1.109"/>
    </reaction>
</comment>
<comment type="cofactor">
    <cofactor evidence="1">
        <name>Zn(2+)</name>
        <dbReference type="ChEBI" id="CHEBI:29105"/>
    </cofactor>
    <text evidence="1">Binds 1 zinc ion per subunit.</text>
</comment>
<comment type="pathway">
    <text evidence="1">Amino-acid biosynthesis; L-methionine biosynthesis via salvage pathway; L-methionine from S-methyl-5-thio-alpha-D-ribose 1-phosphate: step 2/6.</text>
</comment>
<comment type="subcellular location">
    <subcellularLocation>
        <location evidence="1">Cytoplasm</location>
    </subcellularLocation>
</comment>
<comment type="similarity">
    <text evidence="1">Belongs to the aldolase class II family. MtnB subfamily.</text>
</comment>
<organism>
    <name type="scientific">Leishmania infantum</name>
    <dbReference type="NCBI Taxonomy" id="5671"/>
    <lineage>
        <taxon>Eukaryota</taxon>
        <taxon>Discoba</taxon>
        <taxon>Euglenozoa</taxon>
        <taxon>Kinetoplastea</taxon>
        <taxon>Metakinetoplastina</taxon>
        <taxon>Trypanosomatida</taxon>
        <taxon>Trypanosomatidae</taxon>
        <taxon>Leishmaniinae</taxon>
        <taxon>Leishmania</taxon>
    </lineage>
</organism>
<reference key="1">
    <citation type="journal article" date="2007" name="Nat. Genet.">
        <title>Comparative genomic analysis of three Leishmania species that cause diverse human disease.</title>
        <authorList>
            <person name="Peacock C.S."/>
            <person name="Seeger K."/>
            <person name="Harris D."/>
            <person name="Murphy L."/>
            <person name="Ruiz J.C."/>
            <person name="Quail M.A."/>
            <person name="Peters N."/>
            <person name="Adlem E."/>
            <person name="Tivey A."/>
            <person name="Aslett M."/>
            <person name="Kerhornou A."/>
            <person name="Ivens A."/>
            <person name="Fraser A."/>
            <person name="Rajandream M.-A."/>
            <person name="Carver T."/>
            <person name="Norbertczak H."/>
            <person name="Chillingworth T."/>
            <person name="Hance Z."/>
            <person name="Jagels K."/>
            <person name="Moule S."/>
            <person name="Ormond D."/>
            <person name="Rutter S."/>
            <person name="Sqaures R."/>
            <person name="Whitehead S."/>
            <person name="Rabbinowitsch E."/>
            <person name="Arrowsmith C."/>
            <person name="White B."/>
            <person name="Thurston S."/>
            <person name="Bringaud F."/>
            <person name="Baldauf S.L."/>
            <person name="Faulconbridge A."/>
            <person name="Jeffares D."/>
            <person name="Depledge D.P."/>
            <person name="Oyola S.O."/>
            <person name="Hilley J.D."/>
            <person name="Brito L.O."/>
            <person name="Tosi L.R.O."/>
            <person name="Barrell B."/>
            <person name="Cruz A.K."/>
            <person name="Mottram J.C."/>
            <person name="Smith D.F."/>
            <person name="Berriman M."/>
        </authorList>
    </citation>
    <scope>NUCLEOTIDE SEQUENCE [LARGE SCALE GENOMIC DNA]</scope>
    <source>
        <strain>JPCM5</strain>
    </source>
</reference>
<gene>
    <name type="ORF">LinJ28.1900</name>
    <name type="ORF">LinJ_28_1960</name>
</gene>
<sequence length="225" mass="25460">MSDIFPESHPEHPLNLIPELCRKFYDLGWATGTGGGISIKMGENYYIAPSGVQKERIMPNEIFVLNASQDVVEEPRTEKQLKISECTPLFFNAYRLRGAGACLHTHSANCVLISLLCDREFRISHIEMIKGIINNETKKALGFRDTLVVPIIENTDFEKDLTASMAECMVRYPESCAVLVRRHGMYVWSDTWQKAKGAVECIDYLMGLAIRMRTLGLEWEPKGAK</sequence>
<evidence type="ECO:0000255" key="1">
    <source>
        <dbReference type="HAMAP-Rule" id="MF_03116"/>
    </source>
</evidence>
<accession>A4I3R0</accession>
<dbReference type="EC" id="4.2.1.109" evidence="1"/>
<dbReference type="EMBL" id="FR796460">
    <property type="protein sequence ID" value="CAM69417.1"/>
    <property type="molecule type" value="Genomic_DNA"/>
</dbReference>
<dbReference type="RefSeq" id="XP_001470222.1">
    <property type="nucleotide sequence ID" value="XM_001470185.1"/>
</dbReference>
<dbReference type="SMR" id="A4I3R0"/>
<dbReference type="FunCoup" id="A4I3R0">
    <property type="interactions" value="163"/>
</dbReference>
<dbReference type="STRING" id="5671.A4I3R0"/>
<dbReference type="GeneID" id="5070410"/>
<dbReference type="KEGG" id="lif:LINJ_28_1960"/>
<dbReference type="VEuPathDB" id="TriTrypDB:LINF_280024700"/>
<dbReference type="eggNOG" id="KOG2631">
    <property type="taxonomic scope" value="Eukaryota"/>
</dbReference>
<dbReference type="InParanoid" id="A4I3R0"/>
<dbReference type="OMA" id="WFPGTSG"/>
<dbReference type="UniPathway" id="UPA00904">
    <property type="reaction ID" value="UER00875"/>
</dbReference>
<dbReference type="Proteomes" id="UP000008153">
    <property type="component" value="Chromosome 28"/>
</dbReference>
<dbReference type="GO" id="GO:0005737">
    <property type="term" value="C:cytoplasm"/>
    <property type="evidence" value="ECO:0007669"/>
    <property type="project" value="UniProtKB-SubCell"/>
</dbReference>
<dbReference type="GO" id="GO:0046570">
    <property type="term" value="F:methylthioribulose 1-phosphate dehydratase activity"/>
    <property type="evidence" value="ECO:0007669"/>
    <property type="project" value="UniProtKB-UniRule"/>
</dbReference>
<dbReference type="GO" id="GO:0008270">
    <property type="term" value="F:zinc ion binding"/>
    <property type="evidence" value="ECO:0007669"/>
    <property type="project" value="UniProtKB-UniRule"/>
</dbReference>
<dbReference type="GO" id="GO:0019509">
    <property type="term" value="P:L-methionine salvage from methylthioadenosine"/>
    <property type="evidence" value="ECO:0007669"/>
    <property type="project" value="UniProtKB-UniRule"/>
</dbReference>
<dbReference type="FunFam" id="3.40.225.10:FF:000003">
    <property type="entry name" value="Methylthioribulose-1-phosphate dehydratase"/>
    <property type="match status" value="1"/>
</dbReference>
<dbReference type="Gene3D" id="3.40.225.10">
    <property type="entry name" value="Class II aldolase/adducin N-terminal domain"/>
    <property type="match status" value="1"/>
</dbReference>
<dbReference type="HAMAP" id="MF_03116">
    <property type="entry name" value="Salvage_MtnB_euk"/>
    <property type="match status" value="1"/>
</dbReference>
<dbReference type="InterPro" id="IPR001303">
    <property type="entry name" value="Aldolase_II/adducin_N"/>
</dbReference>
<dbReference type="InterPro" id="IPR036409">
    <property type="entry name" value="Aldolase_II/adducin_N_sf"/>
</dbReference>
<dbReference type="InterPro" id="IPR017714">
    <property type="entry name" value="MethylthioRu-1-P_deHdtase_MtnB"/>
</dbReference>
<dbReference type="InterPro" id="IPR027514">
    <property type="entry name" value="Salvage_MtnB_euk"/>
</dbReference>
<dbReference type="NCBIfam" id="TIGR03328">
    <property type="entry name" value="salvage_mtnB"/>
    <property type="match status" value="1"/>
</dbReference>
<dbReference type="PANTHER" id="PTHR10640">
    <property type="entry name" value="METHYLTHIORIBULOSE-1-PHOSPHATE DEHYDRATASE"/>
    <property type="match status" value="1"/>
</dbReference>
<dbReference type="PANTHER" id="PTHR10640:SF7">
    <property type="entry name" value="METHYLTHIORIBULOSE-1-PHOSPHATE DEHYDRATASE"/>
    <property type="match status" value="1"/>
</dbReference>
<dbReference type="Pfam" id="PF00596">
    <property type="entry name" value="Aldolase_II"/>
    <property type="match status" value="1"/>
</dbReference>
<dbReference type="SMART" id="SM01007">
    <property type="entry name" value="Aldolase_II"/>
    <property type="match status" value="1"/>
</dbReference>
<dbReference type="SUPFAM" id="SSF53639">
    <property type="entry name" value="AraD/HMP-PK domain-like"/>
    <property type="match status" value="1"/>
</dbReference>
<keyword id="KW-0028">Amino-acid biosynthesis</keyword>
<keyword id="KW-0963">Cytoplasm</keyword>
<keyword id="KW-0456">Lyase</keyword>
<keyword id="KW-0479">Metal-binding</keyword>
<keyword id="KW-0486">Methionine biosynthesis</keyword>
<keyword id="KW-1185">Reference proteome</keyword>
<keyword id="KW-0862">Zinc</keyword>
<name>MTNB_LEIIN</name>
<feature type="chain" id="PRO_0000393797" description="Probable methylthioribulose-1-phosphate dehydratase">
    <location>
        <begin position="1"/>
        <end position="225"/>
    </location>
</feature>
<feature type="active site" description="Proton donor/acceptor" evidence="1">
    <location>
        <position position="127"/>
    </location>
</feature>
<feature type="binding site" evidence="1">
    <location>
        <position position="86"/>
    </location>
    <ligand>
        <name>substrate</name>
    </ligand>
</feature>
<feature type="binding site" evidence="1">
    <location>
        <position position="104"/>
    </location>
    <ligand>
        <name>Zn(2+)</name>
        <dbReference type="ChEBI" id="CHEBI:29105"/>
    </ligand>
</feature>
<feature type="binding site" evidence="1">
    <location>
        <position position="106"/>
    </location>
    <ligand>
        <name>Zn(2+)</name>
        <dbReference type="ChEBI" id="CHEBI:29105"/>
    </ligand>
</feature>
<feature type="binding site" evidence="1">
    <location>
        <position position="183"/>
    </location>
    <ligand>
        <name>Zn(2+)</name>
        <dbReference type="ChEBI" id="CHEBI:29105"/>
    </ligand>
</feature>
<protein>
    <recommendedName>
        <fullName evidence="1">Probable methylthioribulose-1-phosphate dehydratase</fullName>
        <shortName evidence="1">MTRu-1-P dehydratase</shortName>
        <ecNumber evidence="1">4.2.1.109</ecNumber>
    </recommendedName>
</protein>
<proteinExistence type="inferred from homology"/>